<feature type="chain" id="PRO_1000140472" description="C4-dicarboxylate transport protein">
    <location>
        <begin position="1"/>
        <end position="447"/>
    </location>
</feature>
<feature type="transmembrane region" description="Helical" evidence="1">
    <location>
        <begin position="22"/>
        <end position="42"/>
    </location>
</feature>
<feature type="transmembrane region" description="Helical" evidence="1">
    <location>
        <begin position="52"/>
        <end position="72"/>
    </location>
</feature>
<feature type="transmembrane region" description="Helical" evidence="1">
    <location>
        <begin position="90"/>
        <end position="110"/>
    </location>
</feature>
<feature type="transmembrane region" description="Helical" evidence="1">
    <location>
        <begin position="159"/>
        <end position="179"/>
    </location>
</feature>
<feature type="transmembrane region" description="Helical" evidence="1">
    <location>
        <begin position="199"/>
        <end position="219"/>
    </location>
</feature>
<feature type="transmembrane region" description="Helical" evidence="1">
    <location>
        <begin position="232"/>
        <end position="252"/>
    </location>
</feature>
<feature type="transmembrane region" description="Helical" evidence="1">
    <location>
        <begin position="325"/>
        <end position="347"/>
    </location>
</feature>
<feature type="transmembrane region" description="Helical" evidence="1">
    <location>
        <begin position="366"/>
        <end position="386"/>
    </location>
</feature>
<gene>
    <name evidence="1" type="primary">dctA</name>
    <name type="ordered locus">Smal_3353</name>
</gene>
<comment type="function">
    <text evidence="1">Responsible for the transport of dicarboxylates such as succinate, fumarate, and malate from the periplasm across the membrane.</text>
</comment>
<comment type="subcellular location">
    <subcellularLocation>
        <location evidence="1">Cell inner membrane</location>
        <topology evidence="1">Multi-pass membrane protein</topology>
    </subcellularLocation>
</comment>
<comment type="similarity">
    <text evidence="1">Belongs to the dicarboxylate/amino acid:cation symporter (DAACS) (TC 2.A.23) family.</text>
</comment>
<organism>
    <name type="scientific">Stenotrophomonas maltophilia (strain R551-3)</name>
    <dbReference type="NCBI Taxonomy" id="391008"/>
    <lineage>
        <taxon>Bacteria</taxon>
        <taxon>Pseudomonadati</taxon>
        <taxon>Pseudomonadota</taxon>
        <taxon>Gammaproteobacteria</taxon>
        <taxon>Lysobacterales</taxon>
        <taxon>Lysobacteraceae</taxon>
        <taxon>Stenotrophomonas</taxon>
        <taxon>Stenotrophomonas maltophilia group</taxon>
    </lineage>
</organism>
<accession>B4SI88</accession>
<sequence>MHIPTAAPAPAKPLPIYRQLYFQVIVAIVLGAILGHYEPLVGEKMKPLGDAFINLVKMIIAPVIFLTIVTGIASMTHLRTVGRVFAKAMAYFLFFSTLALIVGMIVAHVVQPGAGMNINPAELDQTAVHSYVEKSHDLTLVGFLMDIIPKTLVSAFVDGNILQVLFIAVLFGIALASVGEKGKPILNFLEALVAPVFKLVHILMKAAPIGAFGAIAFTIGKYGVGSLVNLAWLVGSFYLTAFLFVAVILGVVCRLCGFSVFKLARYLKAELLLVLGTSSSESALPSLMEKMERAGCSKSVVGLVVPTGYSFNLDGTNIYMTLAALFIAQATNTELTLGHQIALLLVAMLSSKGAAGVTGAGFITLAATLAVVPEVPVAGMALILGVDRFMSECRSLTNFIGNAVATVVVSRWEGALDRNRLQLALDGRESELPPPIDVVPEALPAKG</sequence>
<protein>
    <recommendedName>
        <fullName evidence="1">C4-dicarboxylate transport protein</fullName>
    </recommendedName>
</protein>
<dbReference type="EMBL" id="CP001111">
    <property type="protein sequence ID" value="ACF53052.1"/>
    <property type="molecule type" value="Genomic_DNA"/>
</dbReference>
<dbReference type="RefSeq" id="WP_006391248.1">
    <property type="nucleotide sequence ID" value="NC_011071.1"/>
</dbReference>
<dbReference type="SMR" id="B4SI88"/>
<dbReference type="STRING" id="391008.Smal_3353"/>
<dbReference type="KEGG" id="smt:Smal_3353"/>
<dbReference type="eggNOG" id="COG1301">
    <property type="taxonomic scope" value="Bacteria"/>
</dbReference>
<dbReference type="HOGENOM" id="CLU_019375_7_0_6"/>
<dbReference type="OrthoDB" id="9766690at2"/>
<dbReference type="Proteomes" id="UP000001867">
    <property type="component" value="Chromosome"/>
</dbReference>
<dbReference type="GO" id="GO:0005886">
    <property type="term" value="C:plasma membrane"/>
    <property type="evidence" value="ECO:0007669"/>
    <property type="project" value="UniProtKB-SubCell"/>
</dbReference>
<dbReference type="GO" id="GO:0015138">
    <property type="term" value="F:fumarate transmembrane transporter activity"/>
    <property type="evidence" value="ECO:0007669"/>
    <property type="project" value="TreeGrafter"/>
</dbReference>
<dbReference type="GO" id="GO:0015366">
    <property type="term" value="F:malate:proton symporter activity"/>
    <property type="evidence" value="ECO:0007669"/>
    <property type="project" value="TreeGrafter"/>
</dbReference>
<dbReference type="GO" id="GO:0015141">
    <property type="term" value="F:succinate transmembrane transporter activity"/>
    <property type="evidence" value="ECO:0007669"/>
    <property type="project" value="TreeGrafter"/>
</dbReference>
<dbReference type="GO" id="GO:0070778">
    <property type="term" value="P:L-aspartate transmembrane transport"/>
    <property type="evidence" value="ECO:0007669"/>
    <property type="project" value="TreeGrafter"/>
</dbReference>
<dbReference type="FunFam" id="1.10.3860.10:FF:000001">
    <property type="entry name" value="C4-dicarboxylate transport protein"/>
    <property type="match status" value="1"/>
</dbReference>
<dbReference type="Gene3D" id="1.10.3860.10">
    <property type="entry name" value="Sodium:dicarboxylate symporter"/>
    <property type="match status" value="1"/>
</dbReference>
<dbReference type="HAMAP" id="MF_01300">
    <property type="entry name" value="C4_dicarb_transport"/>
    <property type="match status" value="1"/>
</dbReference>
<dbReference type="InterPro" id="IPR023954">
    <property type="entry name" value="C4_dicarb_transport"/>
</dbReference>
<dbReference type="InterPro" id="IPR001991">
    <property type="entry name" value="Na-dicarboxylate_symporter"/>
</dbReference>
<dbReference type="InterPro" id="IPR018107">
    <property type="entry name" value="Na-dicarboxylate_symporter_CS"/>
</dbReference>
<dbReference type="InterPro" id="IPR036458">
    <property type="entry name" value="Na:dicarbo_symporter_sf"/>
</dbReference>
<dbReference type="NCBIfam" id="NF002461">
    <property type="entry name" value="PRK01663.1"/>
    <property type="match status" value="1"/>
</dbReference>
<dbReference type="NCBIfam" id="NF009587">
    <property type="entry name" value="PRK13027.1"/>
    <property type="match status" value="1"/>
</dbReference>
<dbReference type="PANTHER" id="PTHR42865:SF1">
    <property type="entry name" value="AEROBIC C4-DICARBOXYLATE TRANSPORT PROTEIN"/>
    <property type="match status" value="1"/>
</dbReference>
<dbReference type="PANTHER" id="PTHR42865">
    <property type="entry name" value="PROTON/GLUTAMATE-ASPARTATE SYMPORTER"/>
    <property type="match status" value="1"/>
</dbReference>
<dbReference type="Pfam" id="PF00375">
    <property type="entry name" value="SDF"/>
    <property type="match status" value="1"/>
</dbReference>
<dbReference type="PRINTS" id="PR00173">
    <property type="entry name" value="EDTRNSPORT"/>
</dbReference>
<dbReference type="SUPFAM" id="SSF118215">
    <property type="entry name" value="Proton glutamate symport protein"/>
    <property type="match status" value="1"/>
</dbReference>
<dbReference type="PROSITE" id="PS00713">
    <property type="entry name" value="NA_DICARBOXYL_SYMP_1"/>
    <property type="match status" value="1"/>
</dbReference>
<dbReference type="PROSITE" id="PS00714">
    <property type="entry name" value="NA_DICARBOXYL_SYMP_2"/>
    <property type="match status" value="1"/>
</dbReference>
<proteinExistence type="inferred from homology"/>
<evidence type="ECO:0000255" key="1">
    <source>
        <dbReference type="HAMAP-Rule" id="MF_01300"/>
    </source>
</evidence>
<keyword id="KW-0997">Cell inner membrane</keyword>
<keyword id="KW-1003">Cell membrane</keyword>
<keyword id="KW-0472">Membrane</keyword>
<keyword id="KW-0769">Symport</keyword>
<keyword id="KW-0812">Transmembrane</keyword>
<keyword id="KW-1133">Transmembrane helix</keyword>
<keyword id="KW-0813">Transport</keyword>
<reference key="1">
    <citation type="submission" date="2008-06" db="EMBL/GenBank/DDBJ databases">
        <title>Complete sequence of Stenotrophomonas maltophilia R551-3.</title>
        <authorList>
            <consortium name="US DOE Joint Genome Institute"/>
            <person name="Lucas S."/>
            <person name="Copeland A."/>
            <person name="Lapidus A."/>
            <person name="Glavina del Rio T."/>
            <person name="Dalin E."/>
            <person name="Tice H."/>
            <person name="Pitluck S."/>
            <person name="Chain P."/>
            <person name="Malfatti S."/>
            <person name="Shin M."/>
            <person name="Vergez L."/>
            <person name="Lang D."/>
            <person name="Schmutz J."/>
            <person name="Larimer F."/>
            <person name="Land M."/>
            <person name="Hauser L."/>
            <person name="Kyrpides N."/>
            <person name="Mikhailova N."/>
            <person name="Taghavi S."/>
            <person name="Monchy S."/>
            <person name="Newman L."/>
            <person name="Vangronsveld J."/>
            <person name="van der Lelie D."/>
            <person name="Richardson P."/>
        </authorList>
    </citation>
    <scope>NUCLEOTIDE SEQUENCE [LARGE SCALE GENOMIC DNA]</scope>
    <source>
        <strain>R551-3</strain>
    </source>
</reference>
<name>DCTA_STRM5</name>